<comment type="function">
    <text evidence="1">Catalyzes the synthesis of activated sulfate.</text>
</comment>
<comment type="catalytic activity">
    <reaction evidence="1">
        <text>adenosine 5'-phosphosulfate + ATP = 3'-phosphoadenylyl sulfate + ADP + H(+)</text>
        <dbReference type="Rhea" id="RHEA:24152"/>
        <dbReference type="ChEBI" id="CHEBI:15378"/>
        <dbReference type="ChEBI" id="CHEBI:30616"/>
        <dbReference type="ChEBI" id="CHEBI:58243"/>
        <dbReference type="ChEBI" id="CHEBI:58339"/>
        <dbReference type="ChEBI" id="CHEBI:456216"/>
        <dbReference type="EC" id="2.7.1.25"/>
    </reaction>
</comment>
<comment type="pathway">
    <text evidence="1">Sulfur metabolism; hydrogen sulfide biosynthesis; sulfite from sulfate: step 2/3.</text>
</comment>
<comment type="similarity">
    <text evidence="1">Belongs to the APS kinase family.</text>
</comment>
<keyword id="KW-0067">ATP-binding</keyword>
<keyword id="KW-0418">Kinase</keyword>
<keyword id="KW-0547">Nucleotide-binding</keyword>
<keyword id="KW-0597">Phosphoprotein</keyword>
<keyword id="KW-1185">Reference proteome</keyword>
<keyword id="KW-0808">Transferase</keyword>
<accession>Q88X60</accession>
<accession>F9UND8</accession>
<proteinExistence type="inferred from homology"/>
<organism>
    <name type="scientific">Lactiplantibacillus plantarum (strain ATCC BAA-793 / NCIMB 8826 / WCFS1)</name>
    <name type="common">Lactobacillus plantarum</name>
    <dbReference type="NCBI Taxonomy" id="220668"/>
    <lineage>
        <taxon>Bacteria</taxon>
        <taxon>Bacillati</taxon>
        <taxon>Bacillota</taxon>
        <taxon>Bacilli</taxon>
        <taxon>Lactobacillales</taxon>
        <taxon>Lactobacillaceae</taxon>
        <taxon>Lactiplantibacillus</taxon>
    </lineage>
</organism>
<name>CYSC_LACPL</name>
<protein>
    <recommendedName>
        <fullName evidence="1">Adenylyl-sulfate kinase</fullName>
        <ecNumber evidence="1">2.7.1.25</ecNumber>
    </recommendedName>
    <alternativeName>
        <fullName evidence="1">APS kinase</fullName>
    </alternativeName>
    <alternativeName>
        <fullName evidence="1">ATP adenosine-5'-phosphosulfate 3'-phosphotransferase</fullName>
    </alternativeName>
    <alternativeName>
        <fullName evidence="1">Adenosine-5'-phosphosulfate kinase</fullName>
    </alternativeName>
</protein>
<reference key="1">
    <citation type="journal article" date="2003" name="Proc. Natl. Acad. Sci. U.S.A.">
        <title>Complete genome sequence of Lactobacillus plantarum WCFS1.</title>
        <authorList>
            <person name="Kleerebezem M."/>
            <person name="Boekhorst J."/>
            <person name="van Kranenburg R."/>
            <person name="Molenaar D."/>
            <person name="Kuipers O.P."/>
            <person name="Leer R."/>
            <person name="Tarchini R."/>
            <person name="Peters S.A."/>
            <person name="Sandbrink H.M."/>
            <person name="Fiers M.W.E.J."/>
            <person name="Stiekema W."/>
            <person name="Klein Lankhorst R.M."/>
            <person name="Bron P.A."/>
            <person name="Hoffer S.M."/>
            <person name="Nierop Groot M.N."/>
            <person name="Kerkhoven R."/>
            <person name="De Vries M."/>
            <person name="Ursing B."/>
            <person name="De Vos W.M."/>
            <person name="Siezen R.J."/>
        </authorList>
    </citation>
    <scope>NUCLEOTIDE SEQUENCE [LARGE SCALE GENOMIC DNA]</scope>
    <source>
        <strain>ATCC BAA-793 / NCIMB 8826 / WCFS1</strain>
    </source>
</reference>
<reference key="2">
    <citation type="journal article" date="2012" name="J. Bacteriol.">
        <title>Complete resequencing and reannotation of the Lactobacillus plantarum WCFS1 genome.</title>
        <authorList>
            <person name="Siezen R.J."/>
            <person name="Francke C."/>
            <person name="Renckens B."/>
            <person name="Boekhorst J."/>
            <person name="Wels M."/>
            <person name="Kleerebezem M."/>
            <person name="van Hijum S.A."/>
        </authorList>
    </citation>
    <scope>NUCLEOTIDE SEQUENCE [LARGE SCALE GENOMIC DNA]</scope>
    <scope>GENOME REANNOTATION</scope>
    <source>
        <strain>ATCC BAA-793 / NCIMB 8826 / WCFS1</strain>
    </source>
</reference>
<dbReference type="EC" id="2.7.1.25" evidence="1"/>
<dbReference type="EMBL" id="AL935263">
    <property type="protein sequence ID" value="CCC78727.1"/>
    <property type="molecule type" value="Genomic_DNA"/>
</dbReference>
<dbReference type="RefSeq" id="WP_003643136.1">
    <property type="nucleotide sequence ID" value="NC_004567.2"/>
</dbReference>
<dbReference type="RefSeq" id="YP_004889241.1">
    <property type="nucleotide sequence ID" value="NC_004567.2"/>
</dbReference>
<dbReference type="SMR" id="Q88X60"/>
<dbReference type="STRING" id="220668.lp_1379"/>
<dbReference type="EnsemblBacteria" id="CCC78727">
    <property type="protein sequence ID" value="CCC78727"/>
    <property type="gene ID" value="lp_1379"/>
</dbReference>
<dbReference type="KEGG" id="lpl:lp_1379"/>
<dbReference type="PATRIC" id="fig|220668.9.peg.1158"/>
<dbReference type="eggNOG" id="COG0529">
    <property type="taxonomic scope" value="Bacteria"/>
</dbReference>
<dbReference type="HOGENOM" id="CLU_046932_1_0_9"/>
<dbReference type="OrthoDB" id="9804504at2"/>
<dbReference type="PhylomeDB" id="Q88X60"/>
<dbReference type="UniPathway" id="UPA00140">
    <property type="reaction ID" value="UER00205"/>
</dbReference>
<dbReference type="Proteomes" id="UP000000432">
    <property type="component" value="Chromosome"/>
</dbReference>
<dbReference type="GO" id="GO:0004020">
    <property type="term" value="F:adenylylsulfate kinase activity"/>
    <property type="evidence" value="ECO:0007669"/>
    <property type="project" value="UniProtKB-UniRule"/>
</dbReference>
<dbReference type="GO" id="GO:0005524">
    <property type="term" value="F:ATP binding"/>
    <property type="evidence" value="ECO:0007669"/>
    <property type="project" value="UniProtKB-UniRule"/>
</dbReference>
<dbReference type="GO" id="GO:0070814">
    <property type="term" value="P:hydrogen sulfide biosynthetic process"/>
    <property type="evidence" value="ECO:0007669"/>
    <property type="project" value="UniProtKB-UniRule"/>
</dbReference>
<dbReference type="GO" id="GO:0000103">
    <property type="term" value="P:sulfate assimilation"/>
    <property type="evidence" value="ECO:0007669"/>
    <property type="project" value="UniProtKB-UniRule"/>
</dbReference>
<dbReference type="CDD" id="cd02027">
    <property type="entry name" value="APSK"/>
    <property type="match status" value="1"/>
</dbReference>
<dbReference type="FunFam" id="3.40.50.300:FF:000212">
    <property type="entry name" value="Adenylyl-sulfate kinase"/>
    <property type="match status" value="1"/>
</dbReference>
<dbReference type="Gene3D" id="3.40.50.300">
    <property type="entry name" value="P-loop containing nucleotide triphosphate hydrolases"/>
    <property type="match status" value="1"/>
</dbReference>
<dbReference type="HAMAP" id="MF_00065">
    <property type="entry name" value="Adenylyl_sulf_kinase"/>
    <property type="match status" value="1"/>
</dbReference>
<dbReference type="InterPro" id="IPR002891">
    <property type="entry name" value="APS_kinase"/>
</dbReference>
<dbReference type="InterPro" id="IPR027417">
    <property type="entry name" value="P-loop_NTPase"/>
</dbReference>
<dbReference type="NCBIfam" id="TIGR00455">
    <property type="entry name" value="apsK"/>
    <property type="match status" value="1"/>
</dbReference>
<dbReference type="NCBIfam" id="NF003013">
    <property type="entry name" value="PRK03846.1"/>
    <property type="match status" value="1"/>
</dbReference>
<dbReference type="PANTHER" id="PTHR11055">
    <property type="entry name" value="BIFUNCTIONAL 3'-PHOSPHOADENOSINE 5'-PHOSPHOSULFATE SYNTHASE"/>
    <property type="match status" value="1"/>
</dbReference>
<dbReference type="PANTHER" id="PTHR11055:SF1">
    <property type="entry name" value="PAPS SYNTHETASE, ISOFORM D"/>
    <property type="match status" value="1"/>
</dbReference>
<dbReference type="Pfam" id="PF01583">
    <property type="entry name" value="APS_kinase"/>
    <property type="match status" value="1"/>
</dbReference>
<dbReference type="SUPFAM" id="SSF52540">
    <property type="entry name" value="P-loop containing nucleoside triphosphate hydrolases"/>
    <property type="match status" value="1"/>
</dbReference>
<gene>
    <name evidence="1" type="primary">cysC</name>
    <name type="ordered locus">lp_1379</name>
</gene>
<feature type="chain" id="PRO_0000105912" description="Adenylyl-sulfate kinase">
    <location>
        <begin position="1"/>
        <end position="207"/>
    </location>
</feature>
<feature type="active site" description="Phosphoserine intermediate" evidence="1">
    <location>
        <position position="108"/>
    </location>
</feature>
<feature type="binding site" evidence="1">
    <location>
        <begin position="34"/>
        <end position="41"/>
    </location>
    <ligand>
        <name>ATP</name>
        <dbReference type="ChEBI" id="CHEBI:30616"/>
    </ligand>
</feature>
<sequence length="207" mass="23130">MVKSDNITWHQSQVSKAERQALNHHKSVVLWFTGLSGSGKSTIANAVEKALFDQQVGSYVLDGDNMRFGLNKNLGFSAEDREENIRRIGEVAKLFVDAGVITLTAFISPYRADRDKVRANLEVDEFIEVFVDTPLEVCEQRDVKQLYAKARRGEITGFTGIDAPYEAPIDPEITIDTSKQPLTASVQQVLNYLAEHHYVSLVTANEN</sequence>
<evidence type="ECO:0000255" key="1">
    <source>
        <dbReference type="HAMAP-Rule" id="MF_00065"/>
    </source>
</evidence>